<organism>
    <name type="scientific">Sulfolobus acidocaldarius (strain ATCC 33909 / DSM 639 / JCM 8929 / NBRC 15157 / NCIMB 11770)</name>
    <dbReference type="NCBI Taxonomy" id="330779"/>
    <lineage>
        <taxon>Archaea</taxon>
        <taxon>Thermoproteota</taxon>
        <taxon>Thermoprotei</taxon>
        <taxon>Sulfolobales</taxon>
        <taxon>Sulfolobaceae</taxon>
        <taxon>Sulfolobus</taxon>
    </lineage>
</organism>
<name>SYL2_SULAC</name>
<evidence type="ECO:0000255" key="1">
    <source>
        <dbReference type="HAMAP-Rule" id="MF_00049"/>
    </source>
</evidence>
<evidence type="ECO:0000305" key="2"/>
<keyword id="KW-0030">Aminoacyl-tRNA synthetase</keyword>
<keyword id="KW-0067">ATP-binding</keyword>
<keyword id="KW-0963">Cytoplasm</keyword>
<keyword id="KW-0436">Ligase</keyword>
<keyword id="KW-0547">Nucleotide-binding</keyword>
<keyword id="KW-0648">Protein biosynthesis</keyword>
<keyword id="KW-1185">Reference proteome</keyword>
<feature type="chain" id="PRO_0000152143" description="Leucine--tRNA ligase 2">
    <location>
        <begin position="1"/>
        <end position="942"/>
    </location>
</feature>
<feature type="short sequence motif" description="'HIGH' region">
    <location>
        <begin position="35"/>
        <end position="45"/>
    </location>
</feature>
<feature type="short sequence motif" description="'KMSKS' region">
    <location>
        <begin position="619"/>
        <end position="623"/>
    </location>
</feature>
<feature type="binding site" evidence="1">
    <location>
        <position position="622"/>
    </location>
    <ligand>
        <name>ATP</name>
        <dbReference type="ChEBI" id="CHEBI:30616"/>
    </ligand>
</feature>
<reference key="1">
    <citation type="journal article" date="2005" name="J. Bacteriol.">
        <title>The genome of Sulfolobus acidocaldarius, a model organism of the Crenarchaeota.</title>
        <authorList>
            <person name="Chen L."/>
            <person name="Bruegger K."/>
            <person name="Skovgaard M."/>
            <person name="Redder P."/>
            <person name="She Q."/>
            <person name="Torarinsson E."/>
            <person name="Greve B."/>
            <person name="Awayez M."/>
            <person name="Zibat A."/>
            <person name="Klenk H.-P."/>
            <person name="Garrett R.A."/>
        </authorList>
    </citation>
    <scope>NUCLEOTIDE SEQUENCE [LARGE SCALE GENOMIC DNA]</scope>
    <source>
        <strain>ATCC 33909 / DSM 639 / JCM 8929 / NBRC 15157 / NCIMB 11770</strain>
    </source>
</reference>
<sequence length="942" mass="109179">MKISEKWQKEWENKRVFDATPDPNKKKFFTTIAFPYPNSPFHLGHGRTYVTGDIYARYMRMRGYNVLFPMAFHYTGTPIIAMADDVAKGDKELIDIFKSIYEIPDDVISKLVDPLFMANYFKEEIKQAMKEIGLSIDWRREFTTIDPEFSSFIIWQFRKLQEKGFIVRDTHPVGWCPVHHIPVGMHDTKGDMEPEIGEFVLIYFDSDMGILPVATLRPETVFGAIAVWVNPHESYSIVEIDGKKYVMSEKASSKLSFQIDNLKVITVVKGSELVKHSAVNPITGKEVPIIGANFVDPLTGTGVVMSVPAHAPFDYFYLKKTKSELSIISVIRVEGMGETLAKDLVEKSNPQNDNDLKKLTEQVYRIEYNKGVMIDITKLVKPEYVEELKPLVNLPVPAARQKITEFITQKGLGRKIYEIMNRPVYCRCGNEVVVKILKDQWFLDYGNQEWKDLARKSIESIRFIPPEIKKDFEFVVDWLQKRACARTRGLGTPLPWDKKWIIESLSDSTIYMAFYTIAHRLKEHKLKPSQLTYEFWEYIMLGNGNPDEISKISGIPVEVIKAMRDEFLYWYPLDVRHSGKDLVPNHLSFFIFNHAAIFPHQLWPKGIAVNGFVLYDGKKMSKSLRNIVPLRKAIRMYSPDVIRIALTTNADIGSDVNFSDSYAKSIIDTLKNYYDLLEKLKEFKGEDEGFPEKWLKSKFYQMVINVTQYMDSLDLRSSSNEILYNFSSYINEYFELVRSEGREPNGKLLSQILQIWIKLLSPFAPHFAEELWHKIGKNTLVSLESWPIIDQSNVDLFIDLTHTYHRKLLNDIQAILSVYKDTPKSIKIFVANKEFLNVLRDAINIVQKGGQLRQLMEIHKPKGKQDARLYQKIYEEAREIDDDMKKLVTNFDFDEKDLLDKGLKYLSYKLGIKEIRILDASEMDRTKYNKDALPLRPAIIIE</sequence>
<comment type="catalytic activity">
    <reaction evidence="1">
        <text>tRNA(Leu) + L-leucine + ATP = L-leucyl-tRNA(Leu) + AMP + diphosphate</text>
        <dbReference type="Rhea" id="RHEA:11688"/>
        <dbReference type="Rhea" id="RHEA-COMP:9613"/>
        <dbReference type="Rhea" id="RHEA-COMP:9622"/>
        <dbReference type="ChEBI" id="CHEBI:30616"/>
        <dbReference type="ChEBI" id="CHEBI:33019"/>
        <dbReference type="ChEBI" id="CHEBI:57427"/>
        <dbReference type="ChEBI" id="CHEBI:78442"/>
        <dbReference type="ChEBI" id="CHEBI:78494"/>
        <dbReference type="ChEBI" id="CHEBI:456215"/>
        <dbReference type="EC" id="6.1.1.4"/>
    </reaction>
</comment>
<comment type="subcellular location">
    <subcellularLocation>
        <location evidence="1">Cytoplasm</location>
    </subcellularLocation>
</comment>
<comment type="similarity">
    <text evidence="1">Belongs to the class-I aminoacyl-tRNA synthetase family.</text>
</comment>
<comment type="sequence caution" evidence="2">
    <conflict type="erroneous initiation">
        <sequence resource="EMBL-CDS" id="AAY80885"/>
    </conflict>
</comment>
<accession>Q4J8J7</accession>
<protein>
    <recommendedName>
        <fullName evidence="1">Leucine--tRNA ligase 2</fullName>
        <ecNumber evidence="1">6.1.1.4</ecNumber>
    </recommendedName>
    <alternativeName>
        <fullName evidence="1">Leucyl-tRNA synthetase 2</fullName>
        <shortName evidence="1">LeuRS 2</shortName>
    </alternativeName>
</protein>
<gene>
    <name evidence="1" type="primary">leuS2</name>
    <name type="ordered locus">Saci_1572</name>
</gene>
<proteinExistence type="inferred from homology"/>
<dbReference type="EC" id="6.1.1.4" evidence="1"/>
<dbReference type="EMBL" id="CP000077">
    <property type="protein sequence ID" value="AAY80885.1"/>
    <property type="status" value="ALT_INIT"/>
    <property type="molecule type" value="Genomic_DNA"/>
</dbReference>
<dbReference type="SMR" id="Q4J8J7"/>
<dbReference type="STRING" id="330779.Saci_1572"/>
<dbReference type="KEGG" id="sai:Saci_1572"/>
<dbReference type="PATRIC" id="fig|330779.12.peg.1512"/>
<dbReference type="eggNOG" id="arCOG00809">
    <property type="taxonomic scope" value="Archaea"/>
</dbReference>
<dbReference type="HOGENOM" id="CLU_004174_0_0_2"/>
<dbReference type="Proteomes" id="UP000001018">
    <property type="component" value="Chromosome"/>
</dbReference>
<dbReference type="GO" id="GO:0005737">
    <property type="term" value="C:cytoplasm"/>
    <property type="evidence" value="ECO:0007669"/>
    <property type="project" value="UniProtKB-SubCell"/>
</dbReference>
<dbReference type="GO" id="GO:0002161">
    <property type="term" value="F:aminoacyl-tRNA deacylase activity"/>
    <property type="evidence" value="ECO:0007669"/>
    <property type="project" value="InterPro"/>
</dbReference>
<dbReference type="GO" id="GO:0005524">
    <property type="term" value="F:ATP binding"/>
    <property type="evidence" value="ECO:0007669"/>
    <property type="project" value="UniProtKB-UniRule"/>
</dbReference>
<dbReference type="GO" id="GO:0004823">
    <property type="term" value="F:leucine-tRNA ligase activity"/>
    <property type="evidence" value="ECO:0007669"/>
    <property type="project" value="UniProtKB-UniRule"/>
</dbReference>
<dbReference type="GO" id="GO:0006429">
    <property type="term" value="P:leucyl-tRNA aminoacylation"/>
    <property type="evidence" value="ECO:0007669"/>
    <property type="project" value="UniProtKB-UniRule"/>
</dbReference>
<dbReference type="CDD" id="cd07959">
    <property type="entry name" value="Anticodon_Ia_Leu_AEc"/>
    <property type="match status" value="1"/>
</dbReference>
<dbReference type="CDD" id="cd00812">
    <property type="entry name" value="LeuRS_core"/>
    <property type="match status" value="1"/>
</dbReference>
<dbReference type="Gene3D" id="3.30.2320.20">
    <property type="entry name" value="Class I aminoacyl-tRNA synthetases (RS)"/>
    <property type="match status" value="1"/>
</dbReference>
<dbReference type="Gene3D" id="3.40.50.620">
    <property type="entry name" value="HUPs"/>
    <property type="match status" value="1"/>
</dbReference>
<dbReference type="Gene3D" id="1.10.730.10">
    <property type="entry name" value="Isoleucyl-tRNA Synthetase, Domain 1"/>
    <property type="match status" value="1"/>
</dbReference>
<dbReference type="Gene3D" id="1.10.10.720">
    <property type="entry name" value="leucyl-tRNA synthetase"/>
    <property type="match status" value="1"/>
</dbReference>
<dbReference type="Gene3D" id="3.90.740.10">
    <property type="entry name" value="Valyl/Leucyl/Isoleucyl-tRNA synthetase, editing domain"/>
    <property type="match status" value="1"/>
</dbReference>
<dbReference type="HAMAP" id="MF_00049_A">
    <property type="entry name" value="Leu_tRNA_synth_A"/>
    <property type="match status" value="1"/>
</dbReference>
<dbReference type="InterPro" id="IPR002300">
    <property type="entry name" value="aa-tRNA-synth_Ia"/>
</dbReference>
<dbReference type="InterPro" id="IPR020791">
    <property type="entry name" value="Leu-tRNA-lgase_arc"/>
</dbReference>
<dbReference type="InterPro" id="IPR004493">
    <property type="entry name" value="Leu-tRNA-synth_Ia_arc/euk"/>
</dbReference>
<dbReference type="InterPro" id="IPR013155">
    <property type="entry name" value="M/V/L/I-tRNA-synth_anticd-bd"/>
</dbReference>
<dbReference type="InterPro" id="IPR014729">
    <property type="entry name" value="Rossmann-like_a/b/a_fold"/>
</dbReference>
<dbReference type="InterPro" id="IPR009080">
    <property type="entry name" value="tRNAsynth_Ia_anticodon-bd"/>
</dbReference>
<dbReference type="InterPro" id="IPR009008">
    <property type="entry name" value="Val/Leu/Ile-tRNA-synth_edit"/>
</dbReference>
<dbReference type="NCBIfam" id="TIGR00395">
    <property type="entry name" value="leuS_arch"/>
    <property type="match status" value="1"/>
</dbReference>
<dbReference type="NCBIfam" id="NF008957">
    <property type="entry name" value="PRK12300.1"/>
    <property type="match status" value="1"/>
</dbReference>
<dbReference type="PANTHER" id="PTHR45794:SF1">
    <property type="entry name" value="LEUCINE--TRNA LIGASE, CYTOPLASMIC"/>
    <property type="match status" value="1"/>
</dbReference>
<dbReference type="PANTHER" id="PTHR45794">
    <property type="entry name" value="LEUCYL-TRNA SYNTHETASE"/>
    <property type="match status" value="1"/>
</dbReference>
<dbReference type="Pfam" id="PF08264">
    <property type="entry name" value="Anticodon_1"/>
    <property type="match status" value="1"/>
</dbReference>
<dbReference type="Pfam" id="PF00133">
    <property type="entry name" value="tRNA-synt_1"/>
    <property type="match status" value="1"/>
</dbReference>
<dbReference type="SUPFAM" id="SSF47323">
    <property type="entry name" value="Anticodon-binding domain of a subclass of class I aminoacyl-tRNA synthetases"/>
    <property type="match status" value="1"/>
</dbReference>
<dbReference type="SUPFAM" id="SSF52374">
    <property type="entry name" value="Nucleotidylyl transferase"/>
    <property type="match status" value="1"/>
</dbReference>
<dbReference type="SUPFAM" id="SSF50677">
    <property type="entry name" value="ValRS/IleRS/LeuRS editing domain"/>
    <property type="match status" value="1"/>
</dbReference>